<reference key="1">
    <citation type="journal article" date="2011" name="PLoS Pathog.">
        <title>Multiple candidate effectors from the oomycete pathogen Hyaloperonospora arabidopsidis suppress host plant immunity.</title>
        <authorList>
            <person name="Fabro G."/>
            <person name="Steinbrenner J."/>
            <person name="Coates M."/>
            <person name="Ishaque N."/>
            <person name="Baxter L."/>
            <person name="Studholme D.J."/>
            <person name="Koerner E."/>
            <person name="Allen R.L."/>
            <person name="Piquerez S.J."/>
            <person name="Rougon-Cardoso A."/>
            <person name="Greenshields D."/>
            <person name="Lei R."/>
            <person name="Badel J.L."/>
            <person name="Caillaud M.C."/>
            <person name="Sohn K.H."/>
            <person name="Van den Ackerveken G."/>
            <person name="Parker J.E."/>
            <person name="Beynon J."/>
            <person name="Jones J.D."/>
        </authorList>
    </citation>
    <scope>NUCLEOTIDE SEQUENCE [MRNA] OF 22-131</scope>
    <scope>FUNCTION</scope>
    <source>
        <strain>Emoy2</strain>
    </source>
</reference>
<reference key="2">
    <citation type="journal article" date="2010" name="Science">
        <title>Signatures of adaptation to obligate biotrophy in the Hyaloperonospora arabidopsidis genome.</title>
        <authorList>
            <person name="Baxter L."/>
            <person name="Tripathy S."/>
            <person name="Ishaque N."/>
            <person name="Boot N."/>
            <person name="Cabral A."/>
            <person name="Kemen E."/>
            <person name="Thines M."/>
            <person name="Ah-Fong A."/>
            <person name="Anderson R."/>
            <person name="Badejoko W."/>
            <person name="Bittner-Eddy P."/>
            <person name="Boore J.L."/>
            <person name="Chibucos M.C."/>
            <person name="Coates M."/>
            <person name="Dehal P."/>
            <person name="Delehaunty K."/>
            <person name="Dong S."/>
            <person name="Downton P."/>
            <person name="Dumas B."/>
            <person name="Fabro G."/>
            <person name="Fronick C."/>
            <person name="Fuerstenberg S.I."/>
            <person name="Fulton L."/>
            <person name="Gaulin E."/>
            <person name="Govers F."/>
            <person name="Hughes L."/>
            <person name="Humphray S."/>
            <person name="Jiang R.H."/>
            <person name="Judelson H."/>
            <person name="Kamoun S."/>
            <person name="Kyung K."/>
            <person name="Meijer H."/>
            <person name="Minx P."/>
            <person name="Morris P."/>
            <person name="Nelson J."/>
            <person name="Phuntumart V."/>
            <person name="Qutob D."/>
            <person name="Rehmany A."/>
            <person name="Rougon-Cardoso A."/>
            <person name="Ryden P."/>
            <person name="Torto-Alalibo T."/>
            <person name="Studholme D."/>
            <person name="Wang Y."/>
            <person name="Win J."/>
            <person name="Wood J."/>
            <person name="Clifton S.W."/>
            <person name="Rogers J."/>
            <person name="Van den Ackerveken G."/>
            <person name="Jones J.D."/>
            <person name="McDowell J.M."/>
            <person name="Beynon J."/>
            <person name="Tyler B.M."/>
        </authorList>
    </citation>
    <scope>NUCLEOTIDE SEQUENCE [LARGE SCALE GENOMIC DNA]</scope>
    <source>
        <strain>Emoy2</strain>
    </source>
</reference>
<reference key="3">
    <citation type="submission" date="2015-06" db="UniProtKB">
        <authorList>
            <consortium name="EnsemblProtists"/>
        </authorList>
    </citation>
    <scope>IDENTIFICATION</scope>
    <source>
        <strain>Emoy2</strain>
    </source>
</reference>
<reference key="4">
    <citation type="journal article" date="2013" name="Mol. Plant Microbe Interact.">
        <title>In planta effector competition assays detect Hyaloperonospora arabidopsidis effectors that contribute to virulence and localize to different plant subcellular compartments.</title>
        <authorList>
            <person name="Badel J.L."/>
            <person name="Piquerez S.J."/>
            <person name="Greenshields D."/>
            <person name="Rallapalli G."/>
            <person name="Fabro G."/>
            <person name="Ishaque N."/>
            <person name="Jones J.D."/>
        </authorList>
    </citation>
    <scope>FUNCTION</scope>
</reference>
<reference key="5">
    <citation type="journal article" date="2014" name="PLoS Pathog.">
        <title>Expression profiling during arabidopsis/downy mildew interaction reveals a highly-expressed effector that attenuates responses to salicylic acid.</title>
        <authorList>
            <person name="Asai S."/>
            <person name="Rallapalli G."/>
            <person name="Piquerez S.J."/>
            <person name="Caillaud M.C."/>
            <person name="Furzer O.J."/>
            <person name="Ishaque N."/>
            <person name="Wirthmueller L."/>
            <person name="Fabro G."/>
            <person name="Shirasu K."/>
            <person name="Jones J.D."/>
        </authorList>
    </citation>
    <scope>INDUCTION</scope>
    <scope>FUNCTION</scope>
</reference>
<keyword id="KW-0325">Glycoprotein</keyword>
<keyword id="KW-1185">Reference proteome</keyword>
<keyword id="KW-0964">Secreted</keyword>
<keyword id="KW-0732">Signal</keyword>
<keyword id="KW-0843">Virulence</keyword>
<feature type="signal peptide" evidence="1">
    <location>
        <begin position="1"/>
        <end position="19"/>
    </location>
</feature>
<feature type="chain" id="PRO_5004049109" description="RxLR effector protein 62">
    <location>
        <begin position="20"/>
        <end position="131"/>
    </location>
</feature>
<feature type="short sequence motif" description="RxLR-dEER" evidence="8">
    <location>
        <begin position="49"/>
        <end position="60"/>
    </location>
</feature>
<feature type="glycosylation site" description="N-linked (GlcNAc...) asparagine" evidence="2">
    <location>
        <position position="61"/>
    </location>
</feature>
<dbReference type="EMBL" id="HE574747">
    <property type="protein sequence ID" value="CCC55825.1"/>
    <property type="molecule type" value="mRNA"/>
</dbReference>
<dbReference type="EMBL" id="JH598148">
    <property type="status" value="NOT_ANNOTATED_CDS"/>
    <property type="molecule type" value="Genomic_DNA"/>
</dbReference>
<dbReference type="SMR" id="M4C319"/>
<dbReference type="GlyCosmos" id="M4C319">
    <property type="glycosylation" value="1 site, No reported glycans"/>
</dbReference>
<dbReference type="EnsemblProtists" id="HpaT813486">
    <property type="protein sequence ID" value="HpaP813486"/>
    <property type="gene ID" value="HpaG813486"/>
</dbReference>
<dbReference type="VEuPathDB" id="FungiDB:HpaG813486"/>
<dbReference type="HOGENOM" id="CLU_1931589_0_0_1"/>
<dbReference type="InParanoid" id="M4C319"/>
<dbReference type="PHI-base" id="PHI:4770"/>
<dbReference type="PHI-base" id="PHI:4856"/>
<dbReference type="Proteomes" id="UP000011713">
    <property type="component" value="Unassembled WGS sequence"/>
</dbReference>
<dbReference type="GO" id="GO:0005576">
    <property type="term" value="C:extracellular region"/>
    <property type="evidence" value="ECO:0007669"/>
    <property type="project" value="UniProtKB-SubCell"/>
</dbReference>
<dbReference type="GO" id="GO:0043657">
    <property type="term" value="C:host cell"/>
    <property type="evidence" value="ECO:0007669"/>
    <property type="project" value="UniProtKB-SubCell"/>
</dbReference>
<protein>
    <recommendedName>
        <fullName evidence="6">RxLR effector protein 62</fullName>
    </recommendedName>
</protein>
<comment type="function">
    <text evidence="3 4 5">Secreted effector that suppresses callose deposition, a hallmark of pathogen-associated molecular pattern (PAMP)-triggered immunity (PTI) and renders host plants more susceptible to bacterial infection (PubMed:22072967, PubMed:23734779). Reduces host plant responsiveness to salicylic acid (SA) in haustoriated cells into which host-translocated effectors are delivered (PubMed:25329884).</text>
</comment>
<comment type="subcellular location">
    <subcellularLocation>
        <location evidence="9">Secreted</location>
    </subcellularLocation>
    <subcellularLocation>
        <location evidence="9">Host cell</location>
    </subcellularLocation>
</comment>
<comment type="induction">
    <text evidence="5">Highly expressed during infection.</text>
</comment>
<comment type="domain">
    <text evidence="8">The RxLR-dEER motif is required for the delivery of the effector to the host cell cytoplasm but does not bind phosphatidylinositol monophosphates.</text>
</comment>
<comment type="similarity">
    <text evidence="7">Belongs to the RxLR effector family.</text>
</comment>
<gene>
    <name evidence="6" type="primary">RxL62</name>
</gene>
<organism>
    <name type="scientific">Hyaloperonospora arabidopsidis (strain Emoy2)</name>
    <name type="common">Downy mildew agent</name>
    <name type="synonym">Peronospora arabidopsidis</name>
    <dbReference type="NCBI Taxonomy" id="559515"/>
    <lineage>
        <taxon>Eukaryota</taxon>
        <taxon>Sar</taxon>
        <taxon>Stramenopiles</taxon>
        <taxon>Oomycota</taxon>
        <taxon>Peronosporales</taxon>
        <taxon>Peronosporaceae</taxon>
        <taxon>Hyaloperonospora</taxon>
    </lineage>
</organism>
<evidence type="ECO:0000255" key="1"/>
<evidence type="ECO:0000255" key="2">
    <source>
        <dbReference type="PROSITE-ProRule" id="PRU00498"/>
    </source>
</evidence>
<evidence type="ECO:0000269" key="3">
    <source>
    </source>
</evidence>
<evidence type="ECO:0000269" key="4">
    <source>
    </source>
</evidence>
<evidence type="ECO:0000269" key="5">
    <source>
    </source>
</evidence>
<evidence type="ECO:0000303" key="6">
    <source>
    </source>
</evidence>
<evidence type="ECO:0000305" key="7"/>
<evidence type="ECO:0000305" key="8">
    <source>
    </source>
</evidence>
<evidence type="ECO:0000305" key="9">
    <source>
    </source>
</evidence>
<sequence length="131" mass="15225">MRLDILLFTLSSSTSLALSYSLPMDPAHSSVHTLSAADRHIGERVTRQRHLREEPANEARNYSDLAVEIKRLVEELDSRVLEQADISLLDRHYAGDYKAFRSDLMTYGYQTRFAEQYKLFKKLGIDFKHNY</sequence>
<proteinExistence type="evidence at transcript level"/>
<name>RXL62_HYAAE</name>
<accession>M4C319</accession>
<accession>G3C9P9</accession>